<gene>
    <name evidence="1" type="primary">rpoZ</name>
    <name type="ordered locus">CLM_2813</name>
</gene>
<organism>
    <name type="scientific">Clostridium botulinum (strain Kyoto / Type A2)</name>
    <dbReference type="NCBI Taxonomy" id="536232"/>
    <lineage>
        <taxon>Bacteria</taxon>
        <taxon>Bacillati</taxon>
        <taxon>Bacillota</taxon>
        <taxon>Clostridia</taxon>
        <taxon>Eubacteriales</taxon>
        <taxon>Clostridiaceae</taxon>
        <taxon>Clostridium</taxon>
    </lineage>
</organism>
<protein>
    <recommendedName>
        <fullName evidence="1">DNA-directed RNA polymerase subunit omega</fullName>
        <shortName evidence="1">RNAP omega subunit</shortName>
        <ecNumber evidence="1">2.7.7.6</ecNumber>
    </recommendedName>
    <alternativeName>
        <fullName evidence="1">RNA polymerase omega subunit</fullName>
    </alternativeName>
    <alternativeName>
        <fullName evidence="1">Transcriptase subunit omega</fullName>
    </alternativeName>
</protein>
<name>RPOZ_CLOBJ</name>
<reference key="1">
    <citation type="submission" date="2008-10" db="EMBL/GenBank/DDBJ databases">
        <title>Genome sequence of Clostridium botulinum A2 Kyoto.</title>
        <authorList>
            <person name="Shrivastava S."/>
            <person name="Brinkac L.M."/>
            <person name="Brown J.L."/>
            <person name="Bruce D."/>
            <person name="Detter C.C."/>
            <person name="Johnson E.A."/>
            <person name="Munk C.A."/>
            <person name="Smith L.A."/>
            <person name="Smith T.J."/>
            <person name="Sutton G."/>
            <person name="Brettin T.S."/>
        </authorList>
    </citation>
    <scope>NUCLEOTIDE SEQUENCE [LARGE SCALE GENOMIC DNA]</scope>
    <source>
        <strain>Kyoto / Type A2</strain>
    </source>
</reference>
<comment type="function">
    <text evidence="1">Promotes RNA polymerase assembly. Latches the N- and C-terminal regions of the beta' subunit thereby facilitating its interaction with the beta and alpha subunits.</text>
</comment>
<comment type="catalytic activity">
    <reaction evidence="1">
        <text>RNA(n) + a ribonucleoside 5'-triphosphate = RNA(n+1) + diphosphate</text>
        <dbReference type="Rhea" id="RHEA:21248"/>
        <dbReference type="Rhea" id="RHEA-COMP:14527"/>
        <dbReference type="Rhea" id="RHEA-COMP:17342"/>
        <dbReference type="ChEBI" id="CHEBI:33019"/>
        <dbReference type="ChEBI" id="CHEBI:61557"/>
        <dbReference type="ChEBI" id="CHEBI:140395"/>
        <dbReference type="EC" id="2.7.7.6"/>
    </reaction>
</comment>
<comment type="subunit">
    <text evidence="1">The RNAP catalytic core consists of 2 alpha, 1 beta, 1 beta' and 1 omega subunit. When a sigma factor is associated with the core the holoenzyme is formed, which can initiate transcription.</text>
</comment>
<comment type="similarity">
    <text evidence="1">Belongs to the RNA polymerase subunit omega family.</text>
</comment>
<proteinExistence type="inferred from homology"/>
<accession>C1FST3</accession>
<sequence length="72" mass="8013">MSNSMINPSIVNLLEKVDDRYSLVTITSKRSRQLIDGAKPLVDIDSTKPVTVAINEIHEGKITYKTVKEGIK</sequence>
<evidence type="ECO:0000255" key="1">
    <source>
        <dbReference type="HAMAP-Rule" id="MF_00366"/>
    </source>
</evidence>
<keyword id="KW-0240">DNA-directed RNA polymerase</keyword>
<keyword id="KW-0548">Nucleotidyltransferase</keyword>
<keyword id="KW-0804">Transcription</keyword>
<keyword id="KW-0808">Transferase</keyword>
<dbReference type="EC" id="2.7.7.6" evidence="1"/>
<dbReference type="EMBL" id="CP001581">
    <property type="protein sequence ID" value="ACO83703.1"/>
    <property type="molecule type" value="Genomic_DNA"/>
</dbReference>
<dbReference type="RefSeq" id="WP_003388622.1">
    <property type="nucleotide sequence ID" value="NC_012563.1"/>
</dbReference>
<dbReference type="SMR" id="C1FST3"/>
<dbReference type="GeneID" id="92939254"/>
<dbReference type="KEGG" id="cby:CLM_2813"/>
<dbReference type="eggNOG" id="COG1758">
    <property type="taxonomic scope" value="Bacteria"/>
</dbReference>
<dbReference type="HOGENOM" id="CLU_125406_6_1_9"/>
<dbReference type="Proteomes" id="UP000001374">
    <property type="component" value="Chromosome"/>
</dbReference>
<dbReference type="GO" id="GO:0000428">
    <property type="term" value="C:DNA-directed RNA polymerase complex"/>
    <property type="evidence" value="ECO:0007669"/>
    <property type="project" value="UniProtKB-KW"/>
</dbReference>
<dbReference type="GO" id="GO:0003677">
    <property type="term" value="F:DNA binding"/>
    <property type="evidence" value="ECO:0007669"/>
    <property type="project" value="UniProtKB-UniRule"/>
</dbReference>
<dbReference type="GO" id="GO:0003899">
    <property type="term" value="F:DNA-directed RNA polymerase activity"/>
    <property type="evidence" value="ECO:0007669"/>
    <property type="project" value="UniProtKB-UniRule"/>
</dbReference>
<dbReference type="GO" id="GO:0006351">
    <property type="term" value="P:DNA-templated transcription"/>
    <property type="evidence" value="ECO:0007669"/>
    <property type="project" value="UniProtKB-UniRule"/>
</dbReference>
<dbReference type="Gene3D" id="3.90.940.10">
    <property type="match status" value="1"/>
</dbReference>
<dbReference type="HAMAP" id="MF_00366">
    <property type="entry name" value="RNApol_bact_RpoZ"/>
    <property type="match status" value="1"/>
</dbReference>
<dbReference type="InterPro" id="IPR003716">
    <property type="entry name" value="DNA-dir_RNA_pol_omega"/>
</dbReference>
<dbReference type="InterPro" id="IPR006110">
    <property type="entry name" value="Pol_omega/Rpo6/RPB6"/>
</dbReference>
<dbReference type="InterPro" id="IPR036161">
    <property type="entry name" value="RPB6/omega-like_sf"/>
</dbReference>
<dbReference type="NCBIfam" id="TIGR00690">
    <property type="entry name" value="rpoZ"/>
    <property type="match status" value="1"/>
</dbReference>
<dbReference type="PANTHER" id="PTHR34476">
    <property type="entry name" value="DNA-DIRECTED RNA POLYMERASE SUBUNIT OMEGA"/>
    <property type="match status" value="1"/>
</dbReference>
<dbReference type="PANTHER" id="PTHR34476:SF1">
    <property type="entry name" value="DNA-DIRECTED RNA POLYMERASE SUBUNIT OMEGA"/>
    <property type="match status" value="1"/>
</dbReference>
<dbReference type="Pfam" id="PF01192">
    <property type="entry name" value="RNA_pol_Rpb6"/>
    <property type="match status" value="1"/>
</dbReference>
<dbReference type="SMART" id="SM01409">
    <property type="entry name" value="RNA_pol_Rpb6"/>
    <property type="match status" value="1"/>
</dbReference>
<dbReference type="SUPFAM" id="SSF63562">
    <property type="entry name" value="RPB6/omega subunit-like"/>
    <property type="match status" value="1"/>
</dbReference>
<feature type="chain" id="PRO_1000194786" description="DNA-directed RNA polymerase subunit omega">
    <location>
        <begin position="1"/>
        <end position="72"/>
    </location>
</feature>